<sequence>MAIRVKNLNFFYGSSQTLFDINLEAEEGDTVVLLGPSGAGKSTLIRTLNLLEVPKSGELSIANNEFNLSNAMANPKAIQQLRQDVGMVFQQYHLWPHLTVIENLIEAPMKVRGVSENEAKTDAMELLKRLRLEQLADRFPLHLSGGQQQRVAIARALMMKPQVLLFDEPTAALDPEITAQVVDIIKELQETGITQVIVTHEVNVAQKVATKVVYMEQGKIVEMGSADCFENPKTEQFKHYLSH</sequence>
<proteinExistence type="inferred from homology"/>
<evidence type="ECO:0000250" key="1">
    <source>
        <dbReference type="UniProtKB" id="P0AAF6"/>
    </source>
</evidence>
<evidence type="ECO:0000255" key="2">
    <source>
        <dbReference type="PROSITE-ProRule" id="PRU00434"/>
    </source>
</evidence>
<evidence type="ECO:0000305" key="3"/>
<organism>
    <name type="scientific">Haemophilus influenzae (strain ATCC 51907 / DSM 11121 / KW20 / Rd)</name>
    <dbReference type="NCBI Taxonomy" id="71421"/>
    <lineage>
        <taxon>Bacteria</taxon>
        <taxon>Pseudomonadati</taxon>
        <taxon>Pseudomonadota</taxon>
        <taxon>Gammaproteobacteria</taxon>
        <taxon>Pasteurellales</taxon>
        <taxon>Pasteurellaceae</taxon>
        <taxon>Haemophilus</taxon>
    </lineage>
</organism>
<reference key="1">
    <citation type="journal article" date="1995" name="Science">
        <title>Whole-genome random sequencing and assembly of Haemophilus influenzae Rd.</title>
        <authorList>
            <person name="Fleischmann R.D."/>
            <person name="Adams M.D."/>
            <person name="White O."/>
            <person name="Clayton R.A."/>
            <person name="Kirkness E.F."/>
            <person name="Kerlavage A.R."/>
            <person name="Bult C.J."/>
            <person name="Tomb J.-F."/>
            <person name="Dougherty B.A."/>
            <person name="Merrick J.M."/>
            <person name="McKenney K."/>
            <person name="Sutton G.G."/>
            <person name="FitzHugh W."/>
            <person name="Fields C.A."/>
            <person name="Gocayne J.D."/>
            <person name="Scott J.D."/>
            <person name="Shirley R."/>
            <person name="Liu L.-I."/>
            <person name="Glodek A."/>
            <person name="Kelley J.M."/>
            <person name="Weidman J.F."/>
            <person name="Phillips C.A."/>
            <person name="Spriggs T."/>
            <person name="Hedblom E."/>
            <person name="Cotton M.D."/>
            <person name="Utterback T.R."/>
            <person name="Hanna M.C."/>
            <person name="Nguyen D.T."/>
            <person name="Saudek D.M."/>
            <person name="Brandon R.C."/>
            <person name="Fine L.D."/>
            <person name="Fritchman J.L."/>
            <person name="Fuhrmann J.L."/>
            <person name="Geoghagen N.S.M."/>
            <person name="Gnehm C.L."/>
            <person name="McDonald L.A."/>
            <person name="Small K.V."/>
            <person name="Fraser C.M."/>
            <person name="Smith H.O."/>
            <person name="Venter J.C."/>
        </authorList>
    </citation>
    <scope>NUCLEOTIDE SEQUENCE [LARGE SCALE GENOMIC DNA]</scope>
    <source>
        <strain>ATCC 51907 / DSM 11121 / KW20 / Rd</strain>
    </source>
</reference>
<reference key="2">
    <citation type="journal article" date="1996" name="J. Bacteriol.">
        <title>Altered lipopolysaccharide characteristic of the I69 phenotype in Haemophilus influenzae results from mutations in a novel gene, isn.</title>
        <authorList>
            <person name="Preston A."/>
            <person name="Maskell D."/>
            <person name="Johnson A."/>
            <person name="Moxon E.R."/>
        </authorList>
    </citation>
    <scope>NUCLEOTIDE SEQUENCE [GENOMIC DNA]</scope>
    <source>
        <strain>ATCC 51907 / DSM 11121 / KW20 / Rd</strain>
    </source>
</reference>
<dbReference type="EC" id="7.4.2.1" evidence="1"/>
<dbReference type="EMBL" id="L42023">
    <property type="protein sequence ID" value="AAC22831.1"/>
    <property type="molecule type" value="Genomic_DNA"/>
</dbReference>
<dbReference type="EMBL" id="U17295">
    <property type="protein sequence ID" value="AAA95977.1"/>
    <property type="molecule type" value="Genomic_DNA"/>
</dbReference>
<dbReference type="PIR" id="D64188">
    <property type="entry name" value="D64188"/>
</dbReference>
<dbReference type="RefSeq" id="NP_439336.1">
    <property type="nucleotide sequence ID" value="NC_000907.1"/>
</dbReference>
<dbReference type="SMR" id="P45092"/>
<dbReference type="STRING" id="71421.HI_1180"/>
<dbReference type="EnsemblBacteria" id="AAC22831">
    <property type="protein sequence ID" value="AAC22831"/>
    <property type="gene ID" value="HI_1180"/>
</dbReference>
<dbReference type="KEGG" id="hin:HI_1180"/>
<dbReference type="PATRIC" id="fig|71421.8.peg.1231"/>
<dbReference type="eggNOG" id="COG1126">
    <property type="taxonomic scope" value="Bacteria"/>
</dbReference>
<dbReference type="HOGENOM" id="CLU_000604_1_22_6"/>
<dbReference type="OrthoDB" id="9802264at2"/>
<dbReference type="PhylomeDB" id="P45092"/>
<dbReference type="BioCyc" id="HINF71421:G1GJ1-1212-MONOMER"/>
<dbReference type="Proteomes" id="UP000000579">
    <property type="component" value="Chromosome"/>
</dbReference>
<dbReference type="GO" id="GO:0005886">
    <property type="term" value="C:plasma membrane"/>
    <property type="evidence" value="ECO:0007669"/>
    <property type="project" value="UniProtKB-SubCell"/>
</dbReference>
<dbReference type="GO" id="GO:0005524">
    <property type="term" value="F:ATP binding"/>
    <property type="evidence" value="ECO:0007669"/>
    <property type="project" value="UniProtKB-KW"/>
</dbReference>
<dbReference type="GO" id="GO:0016887">
    <property type="term" value="F:ATP hydrolysis activity"/>
    <property type="evidence" value="ECO:0007669"/>
    <property type="project" value="InterPro"/>
</dbReference>
<dbReference type="GO" id="GO:0015426">
    <property type="term" value="F:ATPase-coupled polar amino acid-transporter activity"/>
    <property type="evidence" value="ECO:0007669"/>
    <property type="project" value="RHEA"/>
</dbReference>
<dbReference type="Gene3D" id="3.40.50.300">
    <property type="entry name" value="P-loop containing nucleotide triphosphate hydrolases"/>
    <property type="match status" value="1"/>
</dbReference>
<dbReference type="InterPro" id="IPR003593">
    <property type="entry name" value="AAA+_ATPase"/>
</dbReference>
<dbReference type="InterPro" id="IPR030679">
    <property type="entry name" value="ABC_ATPase_HisP-typ"/>
</dbReference>
<dbReference type="InterPro" id="IPR003439">
    <property type="entry name" value="ABC_transporter-like_ATP-bd"/>
</dbReference>
<dbReference type="InterPro" id="IPR017871">
    <property type="entry name" value="ABC_transporter-like_CS"/>
</dbReference>
<dbReference type="InterPro" id="IPR050086">
    <property type="entry name" value="MetN_ABC_transporter-like"/>
</dbReference>
<dbReference type="InterPro" id="IPR027417">
    <property type="entry name" value="P-loop_NTPase"/>
</dbReference>
<dbReference type="NCBIfam" id="NF008338">
    <property type="entry name" value="PRK11124.1"/>
    <property type="match status" value="1"/>
</dbReference>
<dbReference type="PANTHER" id="PTHR43166">
    <property type="entry name" value="AMINO ACID IMPORT ATP-BINDING PROTEIN"/>
    <property type="match status" value="1"/>
</dbReference>
<dbReference type="PANTHER" id="PTHR43166:SF25">
    <property type="entry name" value="ARGININE TRANSPORT ATP-BINDING PROTEIN ARTP"/>
    <property type="match status" value="1"/>
</dbReference>
<dbReference type="Pfam" id="PF00005">
    <property type="entry name" value="ABC_tran"/>
    <property type="match status" value="1"/>
</dbReference>
<dbReference type="PIRSF" id="PIRSF039085">
    <property type="entry name" value="ABC_ATPase_HisP"/>
    <property type="match status" value="1"/>
</dbReference>
<dbReference type="SMART" id="SM00382">
    <property type="entry name" value="AAA"/>
    <property type="match status" value="1"/>
</dbReference>
<dbReference type="SUPFAM" id="SSF52540">
    <property type="entry name" value="P-loop containing nucleoside triphosphate hydrolases"/>
    <property type="match status" value="1"/>
</dbReference>
<dbReference type="PROSITE" id="PS00211">
    <property type="entry name" value="ABC_TRANSPORTER_1"/>
    <property type="match status" value="1"/>
</dbReference>
<dbReference type="PROSITE" id="PS50893">
    <property type="entry name" value="ABC_TRANSPORTER_2"/>
    <property type="match status" value="1"/>
</dbReference>
<comment type="function">
    <text evidence="1">Part of the ABC transporter complex ArtPIQM involved in arginine transport. Probably responsible for energy coupling to the transport system.</text>
</comment>
<comment type="catalytic activity">
    <reaction evidence="1">
        <text>a polar amino acid(out) + ATP + H2O = a polar amino acid(in) + ADP + phosphate + H(+)</text>
        <dbReference type="Rhea" id="RHEA:14673"/>
        <dbReference type="ChEBI" id="CHEBI:15377"/>
        <dbReference type="ChEBI" id="CHEBI:15378"/>
        <dbReference type="ChEBI" id="CHEBI:30616"/>
        <dbReference type="ChEBI" id="CHEBI:43474"/>
        <dbReference type="ChEBI" id="CHEBI:62031"/>
        <dbReference type="ChEBI" id="CHEBI:456216"/>
        <dbReference type="EC" id="7.4.2.1"/>
    </reaction>
    <physiologicalReaction direction="left-to-right" evidence="1">
        <dbReference type="Rhea" id="RHEA:14674"/>
    </physiologicalReaction>
</comment>
<comment type="catalytic activity">
    <reaction evidence="1">
        <text>L-arginine(out) + ATP + H2O = L-arginine(in) + ADP + phosphate + H(+)</text>
        <dbReference type="Rhea" id="RHEA:29879"/>
        <dbReference type="ChEBI" id="CHEBI:15377"/>
        <dbReference type="ChEBI" id="CHEBI:15378"/>
        <dbReference type="ChEBI" id="CHEBI:30616"/>
        <dbReference type="ChEBI" id="CHEBI:32682"/>
        <dbReference type="ChEBI" id="CHEBI:43474"/>
        <dbReference type="ChEBI" id="CHEBI:456216"/>
        <dbReference type="EC" id="7.4.2.1"/>
    </reaction>
    <physiologicalReaction direction="left-to-right" evidence="1">
        <dbReference type="Rhea" id="RHEA:29880"/>
    </physiologicalReaction>
</comment>
<comment type="subunit">
    <text evidence="1">The complex is composed of two ATP-binding proteins (ArtP), two transmembrane proteins (ArtM and ArtQ) and a solute-binding protein (ArtI).</text>
</comment>
<comment type="subcellular location">
    <subcellularLocation>
        <location evidence="1">Cell inner membrane</location>
        <topology evidence="1">Peripheral membrane protein</topology>
    </subcellularLocation>
</comment>
<comment type="similarity">
    <text evidence="3">Belongs to the ABC transporter superfamily.</text>
</comment>
<protein>
    <recommendedName>
        <fullName evidence="1">Arginine transport ATP-binding protein ArtP</fullName>
        <ecNumber evidence="1">7.4.2.1</ecNumber>
    </recommendedName>
</protein>
<accession>P45092</accession>
<feature type="chain" id="PRO_0000091943" description="Arginine transport ATP-binding protein ArtP">
    <location>
        <begin position="1"/>
        <end position="243"/>
    </location>
</feature>
<feature type="domain" description="ABC transporter" evidence="2">
    <location>
        <begin position="3"/>
        <end position="242"/>
    </location>
</feature>
<feature type="binding site" evidence="2">
    <location>
        <begin position="35"/>
        <end position="42"/>
    </location>
    <ligand>
        <name>ATP</name>
        <dbReference type="ChEBI" id="CHEBI:30616"/>
    </ligand>
</feature>
<gene>
    <name type="primary">artP</name>
    <name type="ordered locus">HI_1180</name>
</gene>
<keyword id="KW-0029">Amino-acid transport</keyword>
<keyword id="KW-0067">ATP-binding</keyword>
<keyword id="KW-0997">Cell inner membrane</keyword>
<keyword id="KW-1003">Cell membrane</keyword>
<keyword id="KW-0472">Membrane</keyword>
<keyword id="KW-0547">Nucleotide-binding</keyword>
<keyword id="KW-1185">Reference proteome</keyword>
<keyword id="KW-1278">Translocase</keyword>
<keyword id="KW-0813">Transport</keyword>
<name>ARTP_HAEIN</name>